<name>ATG12_AJECN</name>
<keyword id="KW-0072">Autophagy</keyword>
<keyword id="KW-1017">Isopeptide bond</keyword>
<keyword id="KW-0472">Membrane</keyword>
<keyword id="KW-0653">Protein transport</keyword>
<keyword id="KW-1185">Reference proteome</keyword>
<keyword id="KW-0813">Transport</keyword>
<keyword id="KW-0833">Ubl conjugation pathway</keyword>
<gene>
    <name type="primary">ATG12</name>
    <name type="ORF">HCAG_05834</name>
</gene>
<evidence type="ECO:0000250" key="1"/>
<evidence type="ECO:0000256" key="2">
    <source>
        <dbReference type="SAM" id="MobiDB-lite"/>
    </source>
</evidence>
<evidence type="ECO:0000305" key="3"/>
<dbReference type="EMBL" id="CH476661">
    <property type="protein sequence ID" value="EDN10031.1"/>
    <property type="molecule type" value="Genomic_DNA"/>
</dbReference>
<dbReference type="SMR" id="A6RA46"/>
<dbReference type="STRING" id="339724.A6RA46"/>
<dbReference type="KEGG" id="aje:HCAG_05834"/>
<dbReference type="VEuPathDB" id="FungiDB:HCAG_05834"/>
<dbReference type="HOGENOM" id="CLU_106795_1_2_1"/>
<dbReference type="OMA" id="DLPMNMS"/>
<dbReference type="OrthoDB" id="1760at299071"/>
<dbReference type="Proteomes" id="UP000009297">
    <property type="component" value="Unassembled WGS sequence"/>
</dbReference>
<dbReference type="GO" id="GO:0034274">
    <property type="term" value="C:Atg12-Atg5-Atg16 complex"/>
    <property type="evidence" value="ECO:0007669"/>
    <property type="project" value="TreeGrafter"/>
</dbReference>
<dbReference type="GO" id="GO:0000421">
    <property type="term" value="C:autophagosome membrane"/>
    <property type="evidence" value="ECO:0007669"/>
    <property type="project" value="TreeGrafter"/>
</dbReference>
<dbReference type="GO" id="GO:0034045">
    <property type="term" value="C:phagophore assembly site membrane"/>
    <property type="evidence" value="ECO:0007669"/>
    <property type="project" value="UniProtKB-SubCell"/>
</dbReference>
<dbReference type="GO" id="GO:0019776">
    <property type="term" value="F:Atg8-family ligase activity"/>
    <property type="evidence" value="ECO:0007669"/>
    <property type="project" value="TreeGrafter"/>
</dbReference>
<dbReference type="GO" id="GO:0000045">
    <property type="term" value="P:autophagosome assembly"/>
    <property type="evidence" value="ECO:0007669"/>
    <property type="project" value="InterPro"/>
</dbReference>
<dbReference type="GO" id="GO:0097352">
    <property type="term" value="P:autophagosome maturation"/>
    <property type="evidence" value="ECO:0007669"/>
    <property type="project" value="TreeGrafter"/>
</dbReference>
<dbReference type="GO" id="GO:0000422">
    <property type="term" value="P:autophagy of mitochondrion"/>
    <property type="evidence" value="ECO:0007669"/>
    <property type="project" value="TreeGrafter"/>
</dbReference>
<dbReference type="GO" id="GO:0061723">
    <property type="term" value="P:glycophagy"/>
    <property type="evidence" value="ECO:0007669"/>
    <property type="project" value="TreeGrafter"/>
</dbReference>
<dbReference type="GO" id="GO:0034727">
    <property type="term" value="P:piecemeal microautophagy of the nucleus"/>
    <property type="evidence" value="ECO:0007669"/>
    <property type="project" value="TreeGrafter"/>
</dbReference>
<dbReference type="GO" id="GO:0015031">
    <property type="term" value="P:protein transport"/>
    <property type="evidence" value="ECO:0007669"/>
    <property type="project" value="UniProtKB-KW"/>
</dbReference>
<dbReference type="CDD" id="cd01612">
    <property type="entry name" value="Ubl_ATG12"/>
    <property type="match status" value="1"/>
</dbReference>
<dbReference type="FunFam" id="3.10.20.90:FF:000148">
    <property type="entry name" value="Ubiquitin-like protein ATG12"/>
    <property type="match status" value="1"/>
</dbReference>
<dbReference type="Gene3D" id="3.10.20.90">
    <property type="entry name" value="Phosphatidylinositol 3-kinase Catalytic Subunit, Chain A, domain 1"/>
    <property type="match status" value="1"/>
</dbReference>
<dbReference type="InterPro" id="IPR007242">
    <property type="entry name" value="Atg12"/>
</dbReference>
<dbReference type="InterPro" id="IPR029071">
    <property type="entry name" value="Ubiquitin-like_domsf"/>
</dbReference>
<dbReference type="PANTHER" id="PTHR13385">
    <property type="entry name" value="AUTOPHAGY PROTEIN 12"/>
    <property type="match status" value="1"/>
</dbReference>
<dbReference type="PANTHER" id="PTHR13385:SF0">
    <property type="entry name" value="UBIQUITIN-LIKE PROTEIN ATG12"/>
    <property type="match status" value="1"/>
</dbReference>
<dbReference type="Pfam" id="PF04110">
    <property type="entry name" value="APG12"/>
    <property type="match status" value="1"/>
</dbReference>
<dbReference type="SUPFAM" id="SSF54236">
    <property type="entry name" value="Ubiquitin-like"/>
    <property type="match status" value="1"/>
</dbReference>
<organism>
    <name type="scientific">Ajellomyces capsulatus (strain NAm1 / WU24)</name>
    <name type="common">Darling's disease fungus</name>
    <name type="synonym">Histoplasma capsulatum</name>
    <dbReference type="NCBI Taxonomy" id="2059318"/>
    <lineage>
        <taxon>Eukaryota</taxon>
        <taxon>Fungi</taxon>
        <taxon>Dikarya</taxon>
        <taxon>Ascomycota</taxon>
        <taxon>Pezizomycotina</taxon>
        <taxon>Eurotiomycetes</taxon>
        <taxon>Eurotiomycetidae</taxon>
        <taxon>Onygenales</taxon>
        <taxon>Ajellomycetaceae</taxon>
        <taxon>Histoplasma</taxon>
    </lineage>
</organism>
<reference key="1">
    <citation type="journal article" date="2009" name="Genome Res.">
        <title>Comparative genomic analyses of the human fungal pathogens Coccidioides and their relatives.</title>
        <authorList>
            <person name="Sharpton T.J."/>
            <person name="Stajich J.E."/>
            <person name="Rounsley S.D."/>
            <person name="Gardner M.J."/>
            <person name="Wortman J.R."/>
            <person name="Jordar V.S."/>
            <person name="Maiti R."/>
            <person name="Kodira C.D."/>
            <person name="Neafsey D.E."/>
            <person name="Zeng Q."/>
            <person name="Hung C.-Y."/>
            <person name="McMahan C."/>
            <person name="Muszewska A."/>
            <person name="Grynberg M."/>
            <person name="Mandel M.A."/>
            <person name="Kellner E.M."/>
            <person name="Barker B.M."/>
            <person name="Galgiani J.N."/>
            <person name="Orbach M.J."/>
            <person name="Kirkland T.N."/>
            <person name="Cole G.T."/>
            <person name="Henn M.R."/>
            <person name="Birren B.W."/>
            <person name="Taylor J.W."/>
        </authorList>
    </citation>
    <scope>NUCLEOTIDE SEQUENCE [LARGE SCALE GENOMIC DNA]</scope>
    <source>
        <strain>NAm1 / WU24</strain>
    </source>
</reference>
<sequence length="179" mass="19112">MASTPPLSASPNSSKPTSPRASNRGLGLTSRQGSRSSRPSNDNGSRGVATTPIPDEDHSADLPLTMSASIVLTGLPKDAHQALADVEAIDSGKVTVRFQPLPSAPILRNRVFKISASQKFETVVKFLRKKLDCKDTDSVFCYVNSVFAPGLDEGVGGLWRCFKTDDQLIVAYSMTPAFG</sequence>
<proteinExistence type="inferred from homology"/>
<accession>A6RA46</accession>
<protein>
    <recommendedName>
        <fullName>Ubiquitin-like protein ATG12</fullName>
    </recommendedName>
    <alternativeName>
        <fullName>Autophagy-related protein 12</fullName>
    </alternativeName>
</protein>
<feature type="chain" id="PRO_0000317928" description="Ubiquitin-like protein ATG12">
    <location>
        <begin position="1"/>
        <end position="179"/>
    </location>
</feature>
<feature type="region of interest" description="Disordered" evidence="2">
    <location>
        <begin position="1"/>
        <end position="60"/>
    </location>
</feature>
<feature type="compositionally biased region" description="Polar residues" evidence="2">
    <location>
        <begin position="1"/>
        <end position="21"/>
    </location>
</feature>
<feature type="compositionally biased region" description="Polar residues" evidence="2">
    <location>
        <begin position="29"/>
        <end position="44"/>
    </location>
</feature>
<feature type="cross-link" description="Glycyl lysine isopeptide (Gly-Lys) (interchain with K-172 in ATG5)" evidence="1">
    <location>
        <position position="179"/>
    </location>
</feature>
<comment type="function">
    <text evidence="1">Ubiquitin-like protein involved in cytoplasm to vacuole transport (Cvt), autophagy vesicles formation, mitophagy, and nucleophagy. Conjugation with ATG5 through a ubiquitin-like conjugating system involving also ATG7 as an E1-like activating enzyme and ATG10 as an E2-like conjugating enzyme, is essential for its function. The ATG12-ATG5 conjugate functions as an E3-like enzyme which is required for lipidation of ATG8 and ATG8 association to the vesicle membranes (By similarity).</text>
</comment>
<comment type="subunit">
    <text evidence="1">Forms a conjugate with ATG5.</text>
</comment>
<comment type="subcellular location">
    <subcellularLocation>
        <location evidence="1">Preautophagosomal structure membrane</location>
        <topology evidence="1">Peripheral membrane protein</topology>
    </subcellularLocation>
</comment>
<comment type="similarity">
    <text evidence="3">Belongs to the ATG12 family.</text>
</comment>